<dbReference type="EMBL" id="AK029435">
    <property type="protein sequence ID" value="BAC26451.1"/>
    <property type="molecule type" value="mRNA"/>
</dbReference>
<dbReference type="EMBL" id="AK053208">
    <property type="protein sequence ID" value="BAC35311.1"/>
    <property type="molecule type" value="mRNA"/>
</dbReference>
<dbReference type="EMBL" id="AL732506">
    <property type="status" value="NOT_ANNOTATED_CDS"/>
    <property type="molecule type" value="Genomic_DNA"/>
</dbReference>
<dbReference type="CCDS" id="CCDS51162.1">
    <molecule id="A2AIP0-5"/>
</dbReference>
<dbReference type="CCDS" id="CCDS89735.1">
    <molecule id="A2AIP0-1"/>
</dbReference>
<dbReference type="RefSeq" id="NP_001155853.1">
    <property type="nucleotide sequence ID" value="NM_001162381.1"/>
</dbReference>
<dbReference type="RefSeq" id="NP_001356006.1">
    <molecule id="A2AIP0-1"/>
    <property type="nucleotide sequence ID" value="NM_001369077.1"/>
</dbReference>
<dbReference type="RefSeq" id="NP_796351.2">
    <molecule id="A2AIP0-5"/>
    <property type="nucleotide sequence ID" value="NM_177377.5"/>
</dbReference>
<dbReference type="RefSeq" id="XP_006538074.1">
    <molecule id="A2AIP0-5"/>
    <property type="nucleotide sequence ID" value="XM_006538011.5"/>
</dbReference>
<dbReference type="RefSeq" id="XP_006538075.1">
    <molecule id="A2AIP0-1"/>
    <property type="nucleotide sequence ID" value="XM_006538012.5"/>
</dbReference>
<dbReference type="PDB" id="8TO0">
    <property type="method" value="EM"/>
    <property type="resolution" value="7.70 A"/>
    <property type="chains" value="B6/C6/CL/Ca/Cq/DK=1-273"/>
</dbReference>
<dbReference type="PDBsum" id="8TO0"/>
<dbReference type="EMDB" id="EMD-41431"/>
<dbReference type="FunCoup" id="A2AIP0">
    <property type="interactions" value="7"/>
</dbReference>
<dbReference type="iPTMnet" id="A2AIP0"/>
<dbReference type="PhosphoSitePlus" id="A2AIP0"/>
<dbReference type="ProteomicsDB" id="275500">
    <molecule id="A2AIP0-1"/>
</dbReference>
<dbReference type="ProteomicsDB" id="275501">
    <molecule id="A2AIP0-2"/>
</dbReference>
<dbReference type="ProteomicsDB" id="275502">
    <molecule id="A2AIP0-3"/>
</dbReference>
<dbReference type="ProteomicsDB" id="275503">
    <molecule id="A2AIP0-4"/>
</dbReference>
<dbReference type="ProteomicsDB" id="275504">
    <molecule id="A2AIP0-5"/>
</dbReference>
<dbReference type="Antibodypedia" id="51192">
    <property type="antibodies" value="19 antibodies from 10 providers"/>
</dbReference>
<dbReference type="Ensembl" id="ENSMUST00000052829.10">
    <molecule id="A2AIP0-5"/>
    <property type="protein sequence ID" value="ENSMUSP00000058980.4"/>
    <property type="gene ID" value="ENSMUSG00000042788.13"/>
</dbReference>
<dbReference type="Ensembl" id="ENSMUST00000107928.9">
    <molecule id="A2AIP0-2"/>
    <property type="protein sequence ID" value="ENSMUSP00000103561.3"/>
    <property type="gene ID" value="ENSMUSG00000042788.13"/>
</dbReference>
<dbReference type="Ensembl" id="ENSMUST00000107929.10">
    <molecule id="A2AIP0-1"/>
    <property type="protein sequence ID" value="ENSMUSP00000103562.4"/>
    <property type="gene ID" value="ENSMUSG00000042788.13"/>
</dbReference>
<dbReference type="GeneID" id="329831"/>
<dbReference type="KEGG" id="mmu:329831"/>
<dbReference type="UCSC" id="uc008spp.1">
    <molecule id="A2AIP0-5"/>
    <property type="organism name" value="mouse"/>
</dbReference>
<dbReference type="UCSC" id="uc012dda.1">
    <molecule id="A2AIP0-1"/>
    <property type="organism name" value="mouse"/>
</dbReference>
<dbReference type="AGR" id="MGI:2445194"/>
<dbReference type="CTD" id="730112"/>
<dbReference type="MGI" id="MGI:2445194">
    <property type="gene designation" value="Cimip2b"/>
</dbReference>
<dbReference type="VEuPathDB" id="HostDB:ENSMUSG00000042788"/>
<dbReference type="eggNOG" id="ENOG502T1NI">
    <property type="taxonomic scope" value="Eukaryota"/>
</dbReference>
<dbReference type="GeneTree" id="ENSGT00940000154822"/>
<dbReference type="HOGENOM" id="CLU_729495_0_0_1"/>
<dbReference type="InParanoid" id="A2AIP0"/>
<dbReference type="OMA" id="CCGQDLT"/>
<dbReference type="OrthoDB" id="72763at9989"/>
<dbReference type="PhylomeDB" id="A2AIP0"/>
<dbReference type="TreeFam" id="TF325739"/>
<dbReference type="BioGRID-ORCS" id="329831">
    <property type="hits" value="1 hit in 45 CRISPR screens"/>
</dbReference>
<dbReference type="PRO" id="PR:A2AIP0"/>
<dbReference type="Proteomes" id="UP000000589">
    <property type="component" value="Chromosome 4"/>
</dbReference>
<dbReference type="RNAct" id="A2AIP0">
    <property type="molecule type" value="protein"/>
</dbReference>
<dbReference type="Bgee" id="ENSMUSG00000042788">
    <property type="expression patterns" value="Expressed in hypothalamus and 42 other cell types or tissues"/>
</dbReference>
<dbReference type="ExpressionAtlas" id="A2AIP0">
    <property type="expression patterns" value="baseline and differential"/>
</dbReference>
<dbReference type="GO" id="GO:0160111">
    <property type="term" value="C:axonemal A tubule inner sheath"/>
    <property type="evidence" value="ECO:0000314"/>
    <property type="project" value="UniProtKB"/>
</dbReference>
<dbReference type="GO" id="GO:0005879">
    <property type="term" value="C:axonemal microtubule"/>
    <property type="evidence" value="ECO:0000250"/>
    <property type="project" value="UniProtKB"/>
</dbReference>
<dbReference type="GO" id="GO:0036126">
    <property type="term" value="C:sperm flagellum"/>
    <property type="evidence" value="ECO:0000314"/>
    <property type="project" value="UniProtKB"/>
</dbReference>
<dbReference type="GO" id="GO:0030317">
    <property type="term" value="P:flagellated sperm motility"/>
    <property type="evidence" value="ECO:0000314"/>
    <property type="project" value="UniProtKB"/>
</dbReference>
<dbReference type="InterPro" id="IPR018902">
    <property type="entry name" value="CMI2A-C-like_dom"/>
</dbReference>
<dbReference type="PANTHER" id="PTHR22146">
    <property type="entry name" value="CAT EYE SYNDROME CRITICAL REGION PROTEIN 6"/>
    <property type="match status" value="1"/>
</dbReference>
<dbReference type="PANTHER" id="PTHR22146:SF8">
    <property type="entry name" value="PROTEIN FAM166B"/>
    <property type="match status" value="1"/>
</dbReference>
<dbReference type="Pfam" id="PF10629">
    <property type="entry name" value="CMI2B-like"/>
    <property type="match status" value="2"/>
</dbReference>
<feature type="chain" id="PRO_0000342384" description="Ciliary microtubule inner protein 2B">
    <location>
        <begin position="1"/>
        <end position="273"/>
    </location>
</feature>
<feature type="region of interest" description="Disordered" evidence="2">
    <location>
        <begin position="59"/>
        <end position="85"/>
    </location>
</feature>
<feature type="region of interest" description="Disordered" evidence="2">
    <location>
        <begin position="123"/>
        <end position="164"/>
    </location>
</feature>
<feature type="compositionally biased region" description="Basic and acidic residues" evidence="2">
    <location>
        <begin position="123"/>
        <end position="159"/>
    </location>
</feature>
<feature type="splice variant" id="VSP_034440" description="In isoform 2 and isoform 4." evidence="5">
    <location>
        <begin position="142"/>
        <end position="161"/>
    </location>
</feature>
<feature type="splice variant" id="VSP_034441" description="In isoform 5." evidence="4">
    <original>FTGYVPRARFLFGSSFPVLTNQALQEFGQMCSRGRAHKDPKPLSPLPRPTFQNLGLLPHYGGYVP</original>
    <variation>ERKWVATKGEGRPQDVLTQHLPHPQVSRAMCPVPASSLAPASLCLPTRHCRNLGRCAHGAGRTRTPNLSPHFPGPRFRIWVSYLTTEATCQVRRAREGLRELRCVCGWGVLWQRELTDTERCPTLGFSFREETLRQFSGELGADFKGQFGGSTQLAFSCLWLYTCQTLGHA</variation>
    <location>
        <begin position="180"/>
        <end position="244"/>
    </location>
</feature>
<feature type="splice variant" id="VSP_034442" description="In isoform 3 and isoform 4." evidence="5">
    <original>FTGYVPRARFLFGSSFPVLTNQALQEFGQMCSRGRAHKDPKPLS</original>
    <variation>IAGIWADVLTGPGAQGPQTSLPTSQAHVSESGSPTSLRRLRARI</variation>
    <location>
        <begin position="180"/>
        <end position="223"/>
    </location>
</feature>
<feature type="splice variant" id="VSP_034443" description="In isoform 3 and isoform 4." evidence="5">
    <location>
        <begin position="224"/>
        <end position="273"/>
    </location>
</feature>
<feature type="sequence conflict" description="In Ref. 1; BAC26451." evidence="5" ref="1">
    <original>A</original>
    <variation>V</variation>
    <location>
        <position position="101"/>
    </location>
</feature>
<gene>
    <name type="primary">Cimip2b</name>
    <name type="synonym">Fam166b</name>
</gene>
<name>CMI2B_MOUSE</name>
<evidence type="ECO:0000250" key="1">
    <source>
        <dbReference type="UniProtKB" id="A8MTA8"/>
    </source>
</evidence>
<evidence type="ECO:0000256" key="2">
    <source>
        <dbReference type="SAM" id="MobiDB-lite"/>
    </source>
</evidence>
<evidence type="ECO:0000269" key="3">
    <source>
    </source>
</evidence>
<evidence type="ECO:0000303" key="4">
    <source>
    </source>
</evidence>
<evidence type="ECO:0000305" key="5"/>
<evidence type="ECO:0007744" key="6">
    <source>
        <dbReference type="PDB" id="8TO0"/>
    </source>
</evidence>
<keyword id="KW-0002">3D-structure</keyword>
<keyword id="KW-0025">Alternative splicing</keyword>
<keyword id="KW-0966">Cell projection</keyword>
<keyword id="KW-0969">Cilium</keyword>
<keyword id="KW-0963">Cytoplasm</keyword>
<keyword id="KW-0206">Cytoskeleton</keyword>
<keyword id="KW-0282">Flagellum</keyword>
<keyword id="KW-1185">Reference proteome</keyword>
<reference key="1">
    <citation type="journal article" date="2005" name="Science">
        <title>The transcriptional landscape of the mammalian genome.</title>
        <authorList>
            <person name="Carninci P."/>
            <person name="Kasukawa T."/>
            <person name="Katayama S."/>
            <person name="Gough J."/>
            <person name="Frith M.C."/>
            <person name="Maeda N."/>
            <person name="Oyama R."/>
            <person name="Ravasi T."/>
            <person name="Lenhard B."/>
            <person name="Wells C."/>
            <person name="Kodzius R."/>
            <person name="Shimokawa K."/>
            <person name="Bajic V.B."/>
            <person name="Brenner S.E."/>
            <person name="Batalov S."/>
            <person name="Forrest A.R."/>
            <person name="Zavolan M."/>
            <person name="Davis M.J."/>
            <person name="Wilming L.G."/>
            <person name="Aidinis V."/>
            <person name="Allen J.E."/>
            <person name="Ambesi-Impiombato A."/>
            <person name="Apweiler R."/>
            <person name="Aturaliya R.N."/>
            <person name="Bailey T.L."/>
            <person name="Bansal M."/>
            <person name="Baxter L."/>
            <person name="Beisel K.W."/>
            <person name="Bersano T."/>
            <person name="Bono H."/>
            <person name="Chalk A.M."/>
            <person name="Chiu K.P."/>
            <person name="Choudhary V."/>
            <person name="Christoffels A."/>
            <person name="Clutterbuck D.R."/>
            <person name="Crowe M.L."/>
            <person name="Dalla E."/>
            <person name="Dalrymple B.P."/>
            <person name="de Bono B."/>
            <person name="Della Gatta G."/>
            <person name="di Bernardo D."/>
            <person name="Down T."/>
            <person name="Engstrom P."/>
            <person name="Fagiolini M."/>
            <person name="Faulkner G."/>
            <person name="Fletcher C.F."/>
            <person name="Fukushima T."/>
            <person name="Furuno M."/>
            <person name="Futaki S."/>
            <person name="Gariboldi M."/>
            <person name="Georgii-Hemming P."/>
            <person name="Gingeras T.R."/>
            <person name="Gojobori T."/>
            <person name="Green R.E."/>
            <person name="Gustincich S."/>
            <person name="Harbers M."/>
            <person name="Hayashi Y."/>
            <person name="Hensch T.K."/>
            <person name="Hirokawa N."/>
            <person name="Hill D."/>
            <person name="Huminiecki L."/>
            <person name="Iacono M."/>
            <person name="Ikeo K."/>
            <person name="Iwama A."/>
            <person name="Ishikawa T."/>
            <person name="Jakt M."/>
            <person name="Kanapin A."/>
            <person name="Katoh M."/>
            <person name="Kawasawa Y."/>
            <person name="Kelso J."/>
            <person name="Kitamura H."/>
            <person name="Kitano H."/>
            <person name="Kollias G."/>
            <person name="Krishnan S.P."/>
            <person name="Kruger A."/>
            <person name="Kummerfeld S.K."/>
            <person name="Kurochkin I.V."/>
            <person name="Lareau L.F."/>
            <person name="Lazarevic D."/>
            <person name="Lipovich L."/>
            <person name="Liu J."/>
            <person name="Liuni S."/>
            <person name="McWilliam S."/>
            <person name="Madan Babu M."/>
            <person name="Madera M."/>
            <person name="Marchionni L."/>
            <person name="Matsuda H."/>
            <person name="Matsuzawa S."/>
            <person name="Miki H."/>
            <person name="Mignone F."/>
            <person name="Miyake S."/>
            <person name="Morris K."/>
            <person name="Mottagui-Tabar S."/>
            <person name="Mulder N."/>
            <person name="Nakano N."/>
            <person name="Nakauchi H."/>
            <person name="Ng P."/>
            <person name="Nilsson R."/>
            <person name="Nishiguchi S."/>
            <person name="Nishikawa S."/>
            <person name="Nori F."/>
            <person name="Ohara O."/>
            <person name="Okazaki Y."/>
            <person name="Orlando V."/>
            <person name="Pang K.C."/>
            <person name="Pavan W.J."/>
            <person name="Pavesi G."/>
            <person name="Pesole G."/>
            <person name="Petrovsky N."/>
            <person name="Piazza S."/>
            <person name="Reed J."/>
            <person name="Reid J.F."/>
            <person name="Ring B.Z."/>
            <person name="Ringwald M."/>
            <person name="Rost B."/>
            <person name="Ruan Y."/>
            <person name="Salzberg S.L."/>
            <person name="Sandelin A."/>
            <person name="Schneider C."/>
            <person name="Schoenbach C."/>
            <person name="Sekiguchi K."/>
            <person name="Semple C.A."/>
            <person name="Seno S."/>
            <person name="Sessa L."/>
            <person name="Sheng Y."/>
            <person name="Shibata Y."/>
            <person name="Shimada H."/>
            <person name="Shimada K."/>
            <person name="Silva D."/>
            <person name="Sinclair B."/>
            <person name="Sperling S."/>
            <person name="Stupka E."/>
            <person name="Sugiura K."/>
            <person name="Sultana R."/>
            <person name="Takenaka Y."/>
            <person name="Taki K."/>
            <person name="Tammoja K."/>
            <person name="Tan S.L."/>
            <person name="Tang S."/>
            <person name="Taylor M.S."/>
            <person name="Tegner J."/>
            <person name="Teichmann S.A."/>
            <person name="Ueda H.R."/>
            <person name="van Nimwegen E."/>
            <person name="Verardo R."/>
            <person name="Wei C.L."/>
            <person name="Yagi K."/>
            <person name="Yamanishi H."/>
            <person name="Zabarovsky E."/>
            <person name="Zhu S."/>
            <person name="Zimmer A."/>
            <person name="Hide W."/>
            <person name="Bult C."/>
            <person name="Grimmond S.M."/>
            <person name="Teasdale R.D."/>
            <person name="Liu E.T."/>
            <person name="Brusic V."/>
            <person name="Quackenbush J."/>
            <person name="Wahlestedt C."/>
            <person name="Mattick J.S."/>
            <person name="Hume D.A."/>
            <person name="Kai C."/>
            <person name="Sasaki D."/>
            <person name="Tomaru Y."/>
            <person name="Fukuda S."/>
            <person name="Kanamori-Katayama M."/>
            <person name="Suzuki M."/>
            <person name="Aoki J."/>
            <person name="Arakawa T."/>
            <person name="Iida J."/>
            <person name="Imamura K."/>
            <person name="Itoh M."/>
            <person name="Kato T."/>
            <person name="Kawaji H."/>
            <person name="Kawagashira N."/>
            <person name="Kawashima T."/>
            <person name="Kojima M."/>
            <person name="Kondo S."/>
            <person name="Konno H."/>
            <person name="Nakano K."/>
            <person name="Ninomiya N."/>
            <person name="Nishio T."/>
            <person name="Okada M."/>
            <person name="Plessy C."/>
            <person name="Shibata K."/>
            <person name="Shiraki T."/>
            <person name="Suzuki S."/>
            <person name="Tagami M."/>
            <person name="Waki K."/>
            <person name="Watahiki A."/>
            <person name="Okamura-Oho Y."/>
            <person name="Suzuki H."/>
            <person name="Kawai J."/>
            <person name="Hayashizaki Y."/>
        </authorList>
    </citation>
    <scope>NUCLEOTIDE SEQUENCE [LARGE SCALE MRNA] (ISOFORM 5)</scope>
    <source>
        <strain>C57BL/6J</strain>
        <tissue>Head</tissue>
        <tissue>Lung</tissue>
    </source>
</reference>
<reference key="2">
    <citation type="journal article" date="2009" name="PLoS Biol.">
        <title>Lineage-specific biology revealed by a finished genome assembly of the mouse.</title>
        <authorList>
            <person name="Church D.M."/>
            <person name="Goodstadt L."/>
            <person name="Hillier L.W."/>
            <person name="Zody M.C."/>
            <person name="Goldstein S."/>
            <person name="She X."/>
            <person name="Bult C.J."/>
            <person name="Agarwala R."/>
            <person name="Cherry J.L."/>
            <person name="DiCuccio M."/>
            <person name="Hlavina W."/>
            <person name="Kapustin Y."/>
            <person name="Meric P."/>
            <person name="Maglott D."/>
            <person name="Birtle Z."/>
            <person name="Marques A.C."/>
            <person name="Graves T."/>
            <person name="Zhou S."/>
            <person name="Teague B."/>
            <person name="Potamousis K."/>
            <person name="Churas C."/>
            <person name="Place M."/>
            <person name="Herschleb J."/>
            <person name="Runnheim R."/>
            <person name="Forrest D."/>
            <person name="Amos-Landgraf J."/>
            <person name="Schwartz D.C."/>
            <person name="Cheng Z."/>
            <person name="Lindblad-Toh K."/>
            <person name="Eichler E.E."/>
            <person name="Ponting C.P."/>
        </authorList>
    </citation>
    <scope>NUCLEOTIDE SEQUENCE [LARGE SCALE GENOMIC DNA]</scope>
    <source>
        <strain>C57BL/6J</strain>
    </source>
</reference>
<reference evidence="6" key="3">
    <citation type="journal article" date="2023" name="Cell">
        <title>De novo protein identification in mammalian sperm using in situ cryoelectron tomography and AlphaFold2 docking.</title>
        <authorList>
            <person name="Chen Z."/>
            <person name="Shiozaki M."/>
            <person name="Haas K.M."/>
            <person name="Skinner W.M."/>
            <person name="Zhao S."/>
            <person name="Guo C."/>
            <person name="Polacco B.J."/>
            <person name="Yu Z."/>
            <person name="Krogan N.J."/>
            <person name="Lishko P.V."/>
            <person name="Kaake R.M."/>
            <person name="Vale R.D."/>
            <person name="Agard D.A."/>
        </authorList>
    </citation>
    <scope>STRUCTURE BY ELECTRON MICROSCOPY (7.70 ANGSTROMS) OF SPERM FLAGELLAR DOUBLET MICROTUBULES</scope>
    <scope>FUNCTION</scope>
    <scope>SUBCELLULAR LOCATION</scope>
    <scope>SUBUNIT</scope>
</reference>
<organism>
    <name type="scientific">Mus musculus</name>
    <name type="common">Mouse</name>
    <dbReference type="NCBI Taxonomy" id="10090"/>
    <lineage>
        <taxon>Eukaryota</taxon>
        <taxon>Metazoa</taxon>
        <taxon>Chordata</taxon>
        <taxon>Craniata</taxon>
        <taxon>Vertebrata</taxon>
        <taxon>Euteleostomi</taxon>
        <taxon>Mammalia</taxon>
        <taxon>Eutheria</taxon>
        <taxon>Euarchontoglires</taxon>
        <taxon>Glires</taxon>
        <taxon>Rodentia</taxon>
        <taxon>Myomorpha</taxon>
        <taxon>Muroidea</taxon>
        <taxon>Muridae</taxon>
        <taxon>Murinae</taxon>
        <taxon>Mus</taxon>
        <taxon>Mus</taxon>
    </lineage>
</organism>
<accession>A2AIP0</accession>
<accession>A2AIP2</accession>
<accession>B0R005</accession>
<accession>B0R006</accession>
<accession>Q8C6T2</accession>
<accession>Q8CDW8</accession>
<proteinExistence type="evidence at protein level"/>
<sequence length="273" mass="30251">MAVVNTSIPGLSGENPHYIPGYTGHCPLLRFSMGQTYGQVTGQLLRGPPGLAWPPAHRTLLPPIQSPRSPVISKGRLPPRRGHERLSSSIIPGYTGFIPRAQFIFAKNCNQVWAEAMSEFTRRHGEQESHQLPDGAKGEREVEEDQLREAEEPPLKQELAHASPYSMDDTDPHKFFMSGFTGYVPRARFLFGSSFPVLTNQALQEFGQMCSRGRAHKDPKPLSPLPRPTFQNLGLLPHYGGYVPGYKFQFGGTFGHLTHDALGLSITQKQLPA</sequence>
<comment type="function">
    <text evidence="3">Microtubule inner protein (MIP) part of the dynein-decorated doublet microtubules (DMTs) in cilia axoneme, which is required for motile cilia beating.</text>
</comment>
<comment type="subunit">
    <text evidence="3">Microtubule inner protein component of sperm flagellar doublet microtubules.</text>
</comment>
<comment type="subcellular location">
    <subcellularLocation>
        <location evidence="1">Cytoplasm</location>
        <location evidence="1">Cytoskeleton</location>
        <location evidence="1">Cilium axoneme</location>
    </subcellularLocation>
    <subcellularLocation>
        <location evidence="3">Cytoplasm</location>
        <location evidence="3">Cytoskeleton</location>
        <location evidence="3">Flagellum axoneme</location>
    </subcellularLocation>
</comment>
<comment type="alternative products">
    <event type="alternative splicing"/>
    <isoform>
        <id>A2AIP0-1</id>
        <name>1</name>
        <sequence type="displayed"/>
    </isoform>
    <isoform>
        <id>A2AIP0-2</id>
        <name>2</name>
        <sequence type="described" ref="VSP_034440"/>
    </isoform>
    <isoform>
        <id>A2AIP0-3</id>
        <name>3</name>
        <sequence type="described" ref="VSP_034442 VSP_034443"/>
    </isoform>
    <isoform>
        <id>A2AIP0-4</id>
        <name>4</name>
        <sequence type="described" ref="VSP_034440 VSP_034442 VSP_034443"/>
    </isoform>
    <isoform>
        <id>A2AIP0-5</id>
        <name>5</name>
        <sequence type="described" ref="VSP_034441"/>
    </isoform>
</comment>
<comment type="tissue specificity">
    <text evidence="1">Expressed in airway epithelial cells.</text>
</comment>
<comment type="similarity">
    <text evidence="5">Belongs to the CIMIP2 family.</text>
</comment>
<protein>
    <recommendedName>
        <fullName>Ciliary microtubule inner protein 2B</fullName>
    </recommendedName>
</protein>